<organism>
    <name type="scientific">Rattus norvegicus</name>
    <name type="common">Rat</name>
    <dbReference type="NCBI Taxonomy" id="10116"/>
    <lineage>
        <taxon>Eukaryota</taxon>
        <taxon>Metazoa</taxon>
        <taxon>Chordata</taxon>
        <taxon>Craniata</taxon>
        <taxon>Vertebrata</taxon>
        <taxon>Euteleostomi</taxon>
        <taxon>Mammalia</taxon>
        <taxon>Eutheria</taxon>
        <taxon>Euarchontoglires</taxon>
        <taxon>Glires</taxon>
        <taxon>Rodentia</taxon>
        <taxon>Myomorpha</taxon>
        <taxon>Muroidea</taxon>
        <taxon>Muridae</taxon>
        <taxon>Murinae</taxon>
        <taxon>Rattus</taxon>
    </lineage>
</organism>
<reference evidence="8" key="1">
    <citation type="journal article" date="2004" name="Nature">
        <title>Genome sequence of the Brown Norway rat yields insights into mammalian evolution.</title>
        <authorList>
            <person name="Gibbs R.A."/>
            <person name="Weinstock G.M."/>
            <person name="Metzker M.L."/>
            <person name="Muzny D.M."/>
            <person name="Sodergren E.J."/>
            <person name="Scherer S."/>
            <person name="Scott G."/>
            <person name="Steffen D."/>
            <person name="Worley K.C."/>
            <person name="Burch P.E."/>
            <person name="Okwuonu G."/>
            <person name="Hines S."/>
            <person name="Lewis L."/>
            <person name="Deramo C."/>
            <person name="Delgado O."/>
            <person name="Dugan-Rocha S."/>
            <person name="Miner G."/>
            <person name="Morgan M."/>
            <person name="Hawes A."/>
            <person name="Gill R."/>
            <person name="Holt R.A."/>
            <person name="Adams M.D."/>
            <person name="Amanatides P.G."/>
            <person name="Baden-Tillson H."/>
            <person name="Barnstead M."/>
            <person name="Chin S."/>
            <person name="Evans C.A."/>
            <person name="Ferriera S."/>
            <person name="Fosler C."/>
            <person name="Glodek A."/>
            <person name="Gu Z."/>
            <person name="Jennings D."/>
            <person name="Kraft C.L."/>
            <person name="Nguyen T."/>
            <person name="Pfannkoch C.M."/>
            <person name="Sitter C."/>
            <person name="Sutton G.G."/>
            <person name="Venter J.C."/>
            <person name="Woodage T."/>
            <person name="Smith D."/>
            <person name="Lee H.-M."/>
            <person name="Gustafson E."/>
            <person name="Cahill P."/>
            <person name="Kana A."/>
            <person name="Doucette-Stamm L."/>
            <person name="Weinstock K."/>
            <person name="Fechtel K."/>
            <person name="Weiss R.B."/>
            <person name="Dunn D.M."/>
            <person name="Green E.D."/>
            <person name="Blakesley R.W."/>
            <person name="Bouffard G.G."/>
            <person name="De Jong P.J."/>
            <person name="Osoegawa K."/>
            <person name="Zhu B."/>
            <person name="Marra M."/>
            <person name="Schein J."/>
            <person name="Bosdet I."/>
            <person name="Fjell C."/>
            <person name="Jones S."/>
            <person name="Krzywinski M."/>
            <person name="Mathewson C."/>
            <person name="Siddiqui A."/>
            <person name="Wye N."/>
            <person name="McPherson J."/>
            <person name="Zhao S."/>
            <person name="Fraser C.M."/>
            <person name="Shetty J."/>
            <person name="Shatsman S."/>
            <person name="Geer K."/>
            <person name="Chen Y."/>
            <person name="Abramzon S."/>
            <person name="Nierman W.C."/>
            <person name="Havlak P.H."/>
            <person name="Chen R."/>
            <person name="Durbin K.J."/>
            <person name="Egan A."/>
            <person name="Ren Y."/>
            <person name="Song X.-Z."/>
            <person name="Li B."/>
            <person name="Liu Y."/>
            <person name="Qin X."/>
            <person name="Cawley S."/>
            <person name="Cooney A.J."/>
            <person name="D'Souza L.M."/>
            <person name="Martin K."/>
            <person name="Wu J.Q."/>
            <person name="Gonzalez-Garay M.L."/>
            <person name="Jackson A.R."/>
            <person name="Kalafus K.J."/>
            <person name="McLeod M.P."/>
            <person name="Milosavljevic A."/>
            <person name="Virk D."/>
            <person name="Volkov A."/>
            <person name="Wheeler D.A."/>
            <person name="Zhang Z."/>
            <person name="Bailey J.A."/>
            <person name="Eichler E.E."/>
            <person name="Tuzun E."/>
            <person name="Birney E."/>
            <person name="Mongin E."/>
            <person name="Ureta-Vidal A."/>
            <person name="Woodwark C."/>
            <person name="Zdobnov E."/>
            <person name="Bork P."/>
            <person name="Suyama M."/>
            <person name="Torrents D."/>
            <person name="Alexandersson M."/>
            <person name="Trask B.J."/>
            <person name="Young J.M."/>
            <person name="Huang H."/>
            <person name="Wang H."/>
            <person name="Xing H."/>
            <person name="Daniels S."/>
            <person name="Gietzen D."/>
            <person name="Schmidt J."/>
            <person name="Stevens K."/>
            <person name="Vitt U."/>
            <person name="Wingrove J."/>
            <person name="Camara F."/>
            <person name="Mar Alba M."/>
            <person name="Abril J.F."/>
            <person name="Guigo R."/>
            <person name="Smit A."/>
            <person name="Dubchak I."/>
            <person name="Rubin E.M."/>
            <person name="Couronne O."/>
            <person name="Poliakov A."/>
            <person name="Huebner N."/>
            <person name="Ganten D."/>
            <person name="Goesele C."/>
            <person name="Hummel O."/>
            <person name="Kreitler T."/>
            <person name="Lee Y.-A."/>
            <person name="Monti J."/>
            <person name="Schulz H."/>
            <person name="Zimdahl H."/>
            <person name="Himmelbauer H."/>
            <person name="Lehrach H."/>
            <person name="Jacob H.J."/>
            <person name="Bromberg S."/>
            <person name="Gullings-Handley J."/>
            <person name="Jensen-Seaman M.I."/>
            <person name="Kwitek A.E."/>
            <person name="Lazar J."/>
            <person name="Pasko D."/>
            <person name="Tonellato P.J."/>
            <person name="Twigger S."/>
            <person name="Ponting C.P."/>
            <person name="Duarte J.M."/>
            <person name="Rice S."/>
            <person name="Goodstadt L."/>
            <person name="Beatson S.A."/>
            <person name="Emes R.D."/>
            <person name="Winter E.E."/>
            <person name="Webber C."/>
            <person name="Brandt P."/>
            <person name="Nyakatura G."/>
            <person name="Adetobi M."/>
            <person name="Chiaromonte F."/>
            <person name="Elnitski L."/>
            <person name="Eswara P."/>
            <person name="Hardison R.C."/>
            <person name="Hou M."/>
            <person name="Kolbe D."/>
            <person name="Makova K."/>
            <person name="Miller W."/>
            <person name="Nekrutenko A."/>
            <person name="Riemer C."/>
            <person name="Schwartz S."/>
            <person name="Taylor J."/>
            <person name="Yang S."/>
            <person name="Zhang Y."/>
            <person name="Lindpaintner K."/>
            <person name="Andrews T.D."/>
            <person name="Caccamo M."/>
            <person name="Clamp M."/>
            <person name="Clarke L."/>
            <person name="Curwen V."/>
            <person name="Durbin R.M."/>
            <person name="Eyras E."/>
            <person name="Searle S.M."/>
            <person name="Cooper G.M."/>
            <person name="Batzoglou S."/>
            <person name="Brudno M."/>
            <person name="Sidow A."/>
            <person name="Stone E.A."/>
            <person name="Payseur B.A."/>
            <person name="Bourque G."/>
            <person name="Lopez-Otin C."/>
            <person name="Puente X.S."/>
            <person name="Chakrabarti K."/>
            <person name="Chatterji S."/>
            <person name="Dewey C."/>
            <person name="Pachter L."/>
            <person name="Bray N."/>
            <person name="Yap V.B."/>
            <person name="Caspi A."/>
            <person name="Tesler G."/>
            <person name="Pevzner P.A."/>
            <person name="Haussler D."/>
            <person name="Roskin K.M."/>
            <person name="Baertsch R."/>
            <person name="Clawson H."/>
            <person name="Furey T.S."/>
            <person name="Hinrichs A.S."/>
            <person name="Karolchik D."/>
            <person name="Kent W.J."/>
            <person name="Rosenbloom K.R."/>
            <person name="Trumbower H."/>
            <person name="Weirauch M."/>
            <person name="Cooper D.N."/>
            <person name="Stenson P.D."/>
            <person name="Ma B."/>
            <person name="Brent M."/>
            <person name="Arumugam M."/>
            <person name="Shteynberg D."/>
            <person name="Copley R.R."/>
            <person name="Taylor M.S."/>
            <person name="Riethman H."/>
            <person name="Mudunuri U."/>
            <person name="Peterson J."/>
            <person name="Guyer M."/>
            <person name="Felsenfeld A."/>
            <person name="Old S."/>
            <person name="Mockrin S."/>
            <person name="Collins F.S."/>
        </authorList>
    </citation>
    <scope>NUCLEOTIDE SEQUENCE [LARGE SCALE GENOMIC DNA]</scope>
    <source>
        <strain evidence="6">Brown Norway</strain>
    </source>
</reference>
<reference evidence="8 9" key="2">
    <citation type="journal article" date="1996" name="Cancer Lett.">
        <title>Identification of cytokeratin subspecies altered in rat experimental esophageal tumors by subtractive cloning.</title>
        <authorList>
            <person name="Wang D.-Y."/>
            <person name="Xiang Y.-Y."/>
            <person name="Tanaka M."/>
            <person name="Shen Q."/>
            <person name="Sugimura H."/>
        </authorList>
    </citation>
    <scope>NUCLEOTIDE SEQUENCE [MRNA] OF 67-317</scope>
    <scope>TISSUE SPECIFICITY</scope>
    <source>
        <strain evidence="7">Wistar</strain>
        <tissue>Esophagus</tissue>
    </source>
</reference>
<reference evidence="8 10" key="3">
    <citation type="journal article" date="2004" name="Eur. J. Cell Biol.">
        <title>Comprehensive analysis of keratin gene clusters in humans and rodents.</title>
        <authorList>
            <person name="Hesse M."/>
            <person name="Zimek A."/>
            <person name="Weber K."/>
            <person name="Magin T.M."/>
        </authorList>
    </citation>
    <scope>IDENTIFICATION</scope>
    <source>
        <strain evidence="10">Brown Norway</strain>
    </source>
</reference>
<accession>Q6IFV1</accession>
<accession>O35813</accession>
<comment type="function">
    <text evidence="2">The nonhelical tail domain is involved in promoting KRT5-KRT14 filaments to self-organize into large bundles and enhances the mechanical properties involved in resilience of keratin intermediate filaments in vitro.</text>
</comment>
<comment type="subunit">
    <text evidence="2 3">Heterotetramer of two type I and two type II keratins (By similarity). Forms a disulfide-linked heterodimer (via 2B domains) with KRT5 (via 2B domains) (By similarity). Forms a heterodimer with KRT1; the interaction is more abundant in the absence of KRT5 (By similarity). Interacts with TRADD and with keratin filaments (By similarity). Associates with other type I keratins (By similarity). Interacts with EPPK1 (By similarity). Interacts with KLHL24 (By similarity). Interacts with PKP1 (via N-terminus) and PKP2 (By similarity).</text>
</comment>
<comment type="subcellular location">
    <subcellularLocation>
        <location evidence="2">Cytoplasm</location>
    </subcellularLocation>
    <subcellularLocation>
        <location evidence="2">Nucleus</location>
    </subcellularLocation>
    <text evidence="2">Expressed in both as a filamentous pattern.</text>
</comment>
<comment type="tissue specificity">
    <text evidence="7">Expressed in most cells of squamous cell carcinomas, in spinous and suprabasal cells around the branching papillary region of papillomas, and weakly in a few proliferative cells of hyperplastic tissue.</text>
</comment>
<comment type="PTM">
    <text evidence="3">A disulfide bond is formed between rather than within filaments and promotes the formation of a keratin filament cage around the nucleus.</text>
</comment>
<comment type="PTM">
    <text evidence="2">Ubiquitinated by the BCR(KLHL24) E3 ubiquitin ligase complex.</text>
</comment>
<comment type="miscellaneous">
    <text>There are two types of cytoskeletal and microfibrillar keratin: I (acidic; 40-55 kDa) and II (neutral to basic; 56-70 kDa).</text>
</comment>
<comment type="similarity">
    <text evidence="4">Belongs to the intermediate filament family.</text>
</comment>
<keyword id="KW-0175">Coiled coil</keyword>
<keyword id="KW-0963">Cytoplasm</keyword>
<keyword id="KW-1015">Disulfide bond</keyword>
<keyword id="KW-0403">Intermediate filament</keyword>
<keyword id="KW-0416">Keratin</keyword>
<keyword id="KW-0539">Nucleus</keyword>
<keyword id="KW-0597">Phosphoprotein</keyword>
<keyword id="KW-1185">Reference proteome</keyword>
<keyword id="KW-0832">Ubl conjugation</keyword>
<sequence length="485" mass="52684">MATCSRQFTSSSSMKGSCGIGGGSSRMSSVLAGGSCRAPSTYGGMSRFSSAGAYAVGSGYGGGFSSSSFGGGFGGGIGGGIGGGLGGGIGGGFGGGIGGGFGGGIGSGFGGGLGDGLLVGSEKVTMQNLNDRLATYLDKVRALEEANSDLEVKIRDWYQRQRPTEIKDYSPYFKTIEDLKSKILAATVDNANVLLQIDNARLAADDFRTKFETEQSLRINVESDINGLRRVLDELTLARADLEMQIESLKEELAYLKKNHEEEMASMRGQVGGDVNVEMDAAPGVDLSRILNEMRDQYEKMAEKNRKDAEDWFFTKTEELNREVATNSELVQSGKSEISELRRTMQNLEIELQSQLSMKASLENNLEETKGRYCMQLAQIQEMIGSVEEQLAQLRCEMEQQNQEYKILLDVKTRLEQEIATYRRLLEGEDAHLSSAQFSSSSQFSSGSQSSRDVTSTNRQIRTKVMDVHDGKVVSTHEQVLRTKN</sequence>
<proteinExistence type="evidence at transcript level"/>
<gene>
    <name type="primary">Krt14</name>
    <name evidence="10" type="synonym">Ka14</name>
    <name type="synonym">Krt1-14</name>
</gene>
<feature type="chain" id="PRO_0000063655" description="Keratin, type I cytoskeletal 14">
    <location>
        <begin position="1"/>
        <end position="485"/>
    </location>
</feature>
<feature type="domain" description="IF rod" evidence="4">
    <location>
        <begin position="122"/>
        <end position="433"/>
    </location>
</feature>
<feature type="region of interest" description="Head" evidence="2">
    <location>
        <begin position="1"/>
        <end position="121"/>
    </location>
</feature>
<feature type="region of interest" description="Disordered" evidence="5">
    <location>
        <begin position="1"/>
        <end position="21"/>
    </location>
</feature>
<feature type="region of interest" description="Coil 1A" evidence="2">
    <location>
        <begin position="122"/>
        <end position="157"/>
    </location>
</feature>
<feature type="region of interest" description="Linker 1" evidence="2">
    <location>
        <begin position="158"/>
        <end position="175"/>
    </location>
</feature>
<feature type="region of interest" description="Coil 1B" evidence="2">
    <location>
        <begin position="176"/>
        <end position="267"/>
    </location>
</feature>
<feature type="region of interest" description="Linker 12" evidence="2">
    <location>
        <begin position="268"/>
        <end position="290"/>
    </location>
</feature>
<feature type="region of interest" description="Coil 2" evidence="2">
    <location>
        <begin position="291"/>
        <end position="429"/>
    </location>
</feature>
<feature type="region of interest" description="Tail" evidence="2">
    <location>
        <begin position="430"/>
        <end position="485"/>
    </location>
</feature>
<feature type="region of interest" description="Interaction with Type I keratins and keratin filaments" evidence="1">
    <location>
        <begin position="432"/>
        <end position="485"/>
    </location>
</feature>
<feature type="region of interest" description="Disordered" evidence="5">
    <location>
        <begin position="437"/>
        <end position="458"/>
    </location>
</feature>
<feature type="compositionally biased region" description="Polar residues" evidence="5">
    <location>
        <begin position="1"/>
        <end position="15"/>
    </location>
</feature>
<feature type="compositionally biased region" description="Low complexity" evidence="5">
    <location>
        <begin position="437"/>
        <end position="451"/>
    </location>
</feature>
<feature type="site" description="Stutter" evidence="2">
    <location>
        <position position="371"/>
    </location>
</feature>
<feature type="modified residue" description="Phosphoserine" evidence="3">
    <location>
        <position position="448"/>
    </location>
</feature>
<feature type="disulfide bond" description="Interchain" evidence="1">
    <location>
        <position position="374"/>
    </location>
</feature>
<feature type="sequence conflict" description="In Ref. 2; BAA22371." evidence="8" ref="2">
    <original>I</original>
    <variation>L</variation>
    <location>
        <position position="77"/>
    </location>
</feature>
<feature type="sequence conflict" description="In Ref. 2; BAA22371." evidence="8" ref="2">
    <original>I</original>
    <variation>F</variation>
    <location>
        <position position="81"/>
    </location>
</feature>
<feature type="sequence conflict" description="In Ref. 2; BAA22371." evidence="8" ref="2">
    <original>G</original>
    <variation>R</variation>
    <location>
        <position position="84"/>
    </location>
</feature>
<feature type="sequence conflict" description="In Ref. 2; BAA22371." evidence="8" ref="2">
    <location>
        <begin position="88"/>
        <end position="107"/>
    </location>
</feature>
<feature type="sequence conflict" description="In Ref. 2; BAA22371." evidence="8" ref="2">
    <original>DDF</original>
    <variation>NDL</variation>
    <location>
        <begin position="205"/>
        <end position="207"/>
    </location>
</feature>
<feature type="sequence conflict" description="In Ref. 2; BAA22371." evidence="8" ref="2">
    <original>FETEQ</original>
    <variation>YDNET</variation>
    <location>
        <begin position="211"/>
        <end position="215"/>
    </location>
</feature>
<feature type="sequence conflict" description="In Ref. 2; BAA22371." evidence="8" ref="2">
    <original>IN</original>
    <variation>QL</variation>
    <location>
        <begin position="219"/>
        <end position="220"/>
    </location>
</feature>
<feature type="sequence conflict" description="In Ref. 2; BAA22371." evidence="8" ref="2">
    <original>G</original>
    <variation>N</variation>
    <location>
        <position position="227"/>
    </location>
</feature>
<feature type="sequence conflict" description="In Ref. 2; BAA22371." evidence="8" ref="2">
    <original>R</original>
    <variation>C</variation>
    <location>
        <position position="230"/>
    </location>
</feature>
<feature type="sequence conflict" description="In Ref. 2; BAA22371." evidence="8" ref="2">
    <original>LA</original>
    <variation>MS</variation>
    <location>
        <begin position="237"/>
        <end position="238"/>
    </location>
</feature>
<feature type="sequence conflict" description="In Ref. 2; BAA22371." evidence="8" ref="2">
    <original>K</original>
    <variation>T</variation>
    <location>
        <position position="250"/>
    </location>
</feature>
<feature type="sequence conflict" description="In Ref. 2; BAA22371." evidence="8" ref="2">
    <original>ASMRGQV</original>
    <variation>LALRVRL</variation>
    <location>
        <begin position="265"/>
        <end position="271"/>
    </location>
</feature>
<feature type="sequence conflict" description="In Ref. 2; BAA22371." evidence="8" ref="2">
    <original>K</original>
    <variation>Q</variation>
    <location>
        <position position="300"/>
    </location>
</feature>
<feature type="sequence conflict" description="In Ref. 2; BAA22371." evidence="8" ref="2">
    <original>AEDWFFTKT</original>
    <variation>VEAWLEATS</variation>
    <location>
        <begin position="309"/>
        <end position="317"/>
    </location>
</feature>
<evidence type="ECO:0000250" key="1"/>
<evidence type="ECO:0000250" key="2">
    <source>
        <dbReference type="UniProtKB" id="P02533"/>
    </source>
</evidence>
<evidence type="ECO:0000250" key="3">
    <source>
        <dbReference type="UniProtKB" id="Q61781"/>
    </source>
</evidence>
<evidence type="ECO:0000255" key="4">
    <source>
        <dbReference type="PROSITE-ProRule" id="PRU01188"/>
    </source>
</evidence>
<evidence type="ECO:0000256" key="5">
    <source>
        <dbReference type="SAM" id="MobiDB-lite"/>
    </source>
</evidence>
<evidence type="ECO:0000269" key="6">
    <source>
    </source>
</evidence>
<evidence type="ECO:0000269" key="7">
    <source>
    </source>
</evidence>
<evidence type="ECO:0000305" key="8"/>
<evidence type="ECO:0000312" key="9">
    <source>
        <dbReference type="EMBL" id="BAA22371.1"/>
    </source>
</evidence>
<evidence type="ECO:0000312" key="10">
    <source>
        <dbReference type="EMBL" id="DAA04481.1"/>
    </source>
</evidence>
<protein>
    <recommendedName>
        <fullName>Keratin, type I cytoskeletal 14</fullName>
    </recommendedName>
    <alternativeName>
        <fullName>Cytokeratin-14</fullName>
        <shortName>CK-14</shortName>
    </alternativeName>
    <alternativeName>
        <fullName>Keratin-14</fullName>
        <shortName>K14</shortName>
    </alternativeName>
    <alternativeName>
        <fullName>Type I keratin Ka14</fullName>
    </alternativeName>
</protein>
<name>K1C14_RAT</name>
<dbReference type="EMBL" id="AABR03073469">
    <property type="status" value="NOT_ANNOTATED_CDS"/>
    <property type="molecule type" value="Genomic_DNA"/>
</dbReference>
<dbReference type="EMBL" id="D63774">
    <property type="protein sequence ID" value="BAA22371.1"/>
    <property type="molecule type" value="mRNA"/>
</dbReference>
<dbReference type="EMBL" id="BK004047">
    <property type="protein sequence ID" value="DAA04481.1"/>
    <property type="molecule type" value="mRNA"/>
</dbReference>
<dbReference type="RefSeq" id="NP_001008751.1">
    <property type="nucleotide sequence ID" value="NM_001008751.2"/>
</dbReference>
<dbReference type="SMR" id="Q6IFV1"/>
<dbReference type="FunCoup" id="Q6IFV1">
    <property type="interactions" value="168"/>
</dbReference>
<dbReference type="IntAct" id="Q6IFV1">
    <property type="interactions" value="1"/>
</dbReference>
<dbReference type="STRING" id="10116.ENSRNOP00000005285"/>
<dbReference type="GlyGen" id="Q6IFV1">
    <property type="glycosylation" value="1 site, 1 O-linked glycan (1 site)"/>
</dbReference>
<dbReference type="iPTMnet" id="Q6IFV1"/>
<dbReference type="PhosphoSitePlus" id="Q6IFV1"/>
<dbReference type="jPOST" id="Q6IFV1"/>
<dbReference type="PaxDb" id="10116-ENSRNOP00000005285"/>
<dbReference type="Ensembl" id="ENSRNOT00000005285.5">
    <property type="protein sequence ID" value="ENSRNOP00000005285.3"/>
    <property type="gene ID" value="ENSRNOG00000003899.8"/>
</dbReference>
<dbReference type="GeneID" id="287701"/>
<dbReference type="KEGG" id="rno:287701"/>
<dbReference type="UCSC" id="RGD:1307463">
    <property type="organism name" value="rat"/>
</dbReference>
<dbReference type="AGR" id="RGD:1307463"/>
<dbReference type="CTD" id="3861"/>
<dbReference type="RGD" id="1307463">
    <property type="gene designation" value="Krt14"/>
</dbReference>
<dbReference type="eggNOG" id="ENOG502R8V7">
    <property type="taxonomic scope" value="Eukaryota"/>
</dbReference>
<dbReference type="GeneTree" id="ENSGT00940000154602"/>
<dbReference type="HOGENOM" id="CLU_012560_8_1_1"/>
<dbReference type="InParanoid" id="Q6IFV1"/>
<dbReference type="OMA" id="PTEMKDY"/>
<dbReference type="OrthoDB" id="2441647at2759"/>
<dbReference type="PhylomeDB" id="Q6IFV1"/>
<dbReference type="TreeFam" id="TF332742"/>
<dbReference type="Reactome" id="R-RNO-446107">
    <property type="pathway name" value="Type I hemidesmosome assembly"/>
</dbReference>
<dbReference type="Reactome" id="R-RNO-6805567">
    <property type="pathway name" value="Keratinization"/>
</dbReference>
<dbReference type="Reactome" id="R-RNO-6809371">
    <property type="pathway name" value="Formation of the cornified envelope"/>
</dbReference>
<dbReference type="PRO" id="PR:Q6IFV1"/>
<dbReference type="Proteomes" id="UP000002494">
    <property type="component" value="Chromosome 10"/>
</dbReference>
<dbReference type="Bgee" id="ENSRNOG00000003899">
    <property type="expression patterns" value="Expressed in esophagus and 12 other cell types or tissues"/>
</dbReference>
<dbReference type="ExpressionAtlas" id="Q6IFV1">
    <property type="expression patterns" value="baseline"/>
</dbReference>
<dbReference type="GO" id="GO:0045178">
    <property type="term" value="C:basal part of cell"/>
    <property type="evidence" value="ECO:0000266"/>
    <property type="project" value="RGD"/>
</dbReference>
<dbReference type="GO" id="GO:0071944">
    <property type="term" value="C:cell periphery"/>
    <property type="evidence" value="ECO:0000266"/>
    <property type="project" value="RGD"/>
</dbReference>
<dbReference type="GO" id="GO:0001533">
    <property type="term" value="C:cornified envelope"/>
    <property type="evidence" value="ECO:0000266"/>
    <property type="project" value="RGD"/>
</dbReference>
<dbReference type="GO" id="GO:0005737">
    <property type="term" value="C:cytoplasm"/>
    <property type="evidence" value="ECO:0000250"/>
    <property type="project" value="UniProtKB"/>
</dbReference>
<dbReference type="GO" id="GO:0005856">
    <property type="term" value="C:cytoskeleton"/>
    <property type="evidence" value="ECO:0000318"/>
    <property type="project" value="GO_Central"/>
</dbReference>
<dbReference type="GO" id="GO:0005882">
    <property type="term" value="C:intermediate filament"/>
    <property type="evidence" value="ECO:0000266"/>
    <property type="project" value="RGD"/>
</dbReference>
<dbReference type="GO" id="GO:0045095">
    <property type="term" value="C:keratin filament"/>
    <property type="evidence" value="ECO:0000314"/>
    <property type="project" value="UniProtKB"/>
</dbReference>
<dbReference type="GO" id="GO:0005634">
    <property type="term" value="C:nucleus"/>
    <property type="evidence" value="ECO:0000250"/>
    <property type="project" value="UniProtKB"/>
</dbReference>
<dbReference type="GO" id="GO:1990254">
    <property type="term" value="F:keratin filament binding"/>
    <property type="evidence" value="ECO:0000266"/>
    <property type="project" value="RGD"/>
</dbReference>
<dbReference type="GO" id="GO:0005198">
    <property type="term" value="F:structural molecule activity"/>
    <property type="evidence" value="ECO:0007669"/>
    <property type="project" value="InterPro"/>
</dbReference>
<dbReference type="GO" id="GO:0030855">
    <property type="term" value="P:epithelial cell differentiation"/>
    <property type="evidence" value="ECO:0000314"/>
    <property type="project" value="UniProtKB"/>
</dbReference>
<dbReference type="GO" id="GO:0042633">
    <property type="term" value="P:hair cycle"/>
    <property type="evidence" value="ECO:0000266"/>
    <property type="project" value="RGD"/>
</dbReference>
<dbReference type="GO" id="GO:0045110">
    <property type="term" value="P:intermediate filament bundle assembly"/>
    <property type="evidence" value="ECO:0000250"/>
    <property type="project" value="UniProtKB"/>
</dbReference>
<dbReference type="GO" id="GO:0045109">
    <property type="term" value="P:intermediate filament organization"/>
    <property type="evidence" value="ECO:0000318"/>
    <property type="project" value="GO_Central"/>
</dbReference>
<dbReference type="GO" id="GO:0030216">
    <property type="term" value="P:keratinocyte differentiation"/>
    <property type="evidence" value="ECO:0000266"/>
    <property type="project" value="RGD"/>
</dbReference>
<dbReference type="GO" id="GO:0010212">
    <property type="term" value="P:response to ionizing radiation"/>
    <property type="evidence" value="ECO:0000270"/>
    <property type="project" value="RGD"/>
</dbReference>
<dbReference type="GO" id="GO:0009314">
    <property type="term" value="P:response to radiation"/>
    <property type="evidence" value="ECO:0000266"/>
    <property type="project" value="RGD"/>
</dbReference>
<dbReference type="GO" id="GO:0010043">
    <property type="term" value="P:response to zinc ion"/>
    <property type="evidence" value="ECO:0000270"/>
    <property type="project" value="RGD"/>
</dbReference>
<dbReference type="GO" id="GO:0048863">
    <property type="term" value="P:stem cell differentiation"/>
    <property type="evidence" value="ECO:0000266"/>
    <property type="project" value="RGD"/>
</dbReference>
<dbReference type="FunFam" id="1.20.5.1160:FF:000002">
    <property type="entry name" value="Type I keratin 10"/>
    <property type="match status" value="1"/>
</dbReference>
<dbReference type="FunFam" id="1.20.5.170:FF:000002">
    <property type="entry name" value="Type I keratin KA11"/>
    <property type="match status" value="1"/>
</dbReference>
<dbReference type="FunFam" id="1.20.5.500:FF:000001">
    <property type="entry name" value="Type II keratin 23"/>
    <property type="match status" value="1"/>
</dbReference>
<dbReference type="Gene3D" id="1.20.5.170">
    <property type="match status" value="1"/>
</dbReference>
<dbReference type="Gene3D" id="1.20.5.500">
    <property type="entry name" value="Single helix bin"/>
    <property type="match status" value="1"/>
</dbReference>
<dbReference type="Gene3D" id="1.20.5.1160">
    <property type="entry name" value="Vasodilator-stimulated phosphoprotein"/>
    <property type="match status" value="1"/>
</dbReference>
<dbReference type="InterPro" id="IPR018039">
    <property type="entry name" value="IF_conserved"/>
</dbReference>
<dbReference type="InterPro" id="IPR039008">
    <property type="entry name" value="IF_rod_dom"/>
</dbReference>
<dbReference type="InterPro" id="IPR002957">
    <property type="entry name" value="Keratin_I"/>
</dbReference>
<dbReference type="PANTHER" id="PTHR23239">
    <property type="entry name" value="INTERMEDIATE FILAMENT"/>
    <property type="match status" value="1"/>
</dbReference>
<dbReference type="PANTHER" id="PTHR23239:SF368">
    <property type="entry name" value="KERATIN, TYPE I CYTOSKELETAL 14"/>
    <property type="match status" value="1"/>
</dbReference>
<dbReference type="Pfam" id="PF00038">
    <property type="entry name" value="Filament"/>
    <property type="match status" value="1"/>
</dbReference>
<dbReference type="PRINTS" id="PR01248">
    <property type="entry name" value="TYPE1KERATIN"/>
</dbReference>
<dbReference type="SMART" id="SM01391">
    <property type="entry name" value="Filament"/>
    <property type="match status" value="1"/>
</dbReference>
<dbReference type="SUPFAM" id="SSF64593">
    <property type="entry name" value="Intermediate filament protein, coiled coil region"/>
    <property type="match status" value="2"/>
</dbReference>
<dbReference type="SUPFAM" id="SSF46579">
    <property type="entry name" value="Prefoldin"/>
    <property type="match status" value="1"/>
</dbReference>
<dbReference type="PROSITE" id="PS00226">
    <property type="entry name" value="IF_ROD_1"/>
    <property type="match status" value="1"/>
</dbReference>
<dbReference type="PROSITE" id="PS51842">
    <property type="entry name" value="IF_ROD_2"/>
    <property type="match status" value="1"/>
</dbReference>